<reference key="1">
    <citation type="journal article" date="2007" name="J. Bacteriol.">
        <title>The complete genome sequence of Roseobacter denitrificans reveals a mixotrophic rather than photosynthetic metabolism.</title>
        <authorList>
            <person name="Swingley W.D."/>
            <person name="Sadekar S."/>
            <person name="Mastrian S.D."/>
            <person name="Matthies H.J."/>
            <person name="Hao J."/>
            <person name="Ramos H."/>
            <person name="Acharya C.R."/>
            <person name="Conrad A.L."/>
            <person name="Taylor H.L."/>
            <person name="Dejesa L.C."/>
            <person name="Shah M.K."/>
            <person name="O'Huallachain M.E."/>
            <person name="Lince M.T."/>
            <person name="Blankenship R.E."/>
            <person name="Beatty J.T."/>
            <person name="Touchman J.W."/>
        </authorList>
    </citation>
    <scope>NUCLEOTIDE SEQUENCE [LARGE SCALE GENOMIC DNA]</scope>
    <source>
        <strain>ATCC 33942 / OCh 114</strain>
    </source>
</reference>
<dbReference type="EC" id="7.1.2.2" evidence="1"/>
<dbReference type="EMBL" id="CP000362">
    <property type="protein sequence ID" value="ABG33014.1"/>
    <property type="molecule type" value="Genomic_DNA"/>
</dbReference>
<dbReference type="RefSeq" id="WP_011569627.1">
    <property type="nucleotide sequence ID" value="NC_008209.1"/>
</dbReference>
<dbReference type="SMR" id="Q162S9"/>
<dbReference type="STRING" id="375451.RD1_3533"/>
<dbReference type="KEGG" id="rde:RD1_3533"/>
<dbReference type="eggNOG" id="COG0055">
    <property type="taxonomic scope" value="Bacteria"/>
</dbReference>
<dbReference type="HOGENOM" id="CLU_022398_0_2_5"/>
<dbReference type="OrthoDB" id="9801639at2"/>
<dbReference type="Proteomes" id="UP000007029">
    <property type="component" value="Chromosome"/>
</dbReference>
<dbReference type="GO" id="GO:0005886">
    <property type="term" value="C:plasma membrane"/>
    <property type="evidence" value="ECO:0007669"/>
    <property type="project" value="UniProtKB-SubCell"/>
</dbReference>
<dbReference type="GO" id="GO:0045259">
    <property type="term" value="C:proton-transporting ATP synthase complex"/>
    <property type="evidence" value="ECO:0007669"/>
    <property type="project" value="UniProtKB-KW"/>
</dbReference>
<dbReference type="GO" id="GO:0005524">
    <property type="term" value="F:ATP binding"/>
    <property type="evidence" value="ECO:0007669"/>
    <property type="project" value="UniProtKB-UniRule"/>
</dbReference>
<dbReference type="GO" id="GO:0016887">
    <property type="term" value="F:ATP hydrolysis activity"/>
    <property type="evidence" value="ECO:0007669"/>
    <property type="project" value="InterPro"/>
</dbReference>
<dbReference type="GO" id="GO:0046933">
    <property type="term" value="F:proton-transporting ATP synthase activity, rotational mechanism"/>
    <property type="evidence" value="ECO:0007669"/>
    <property type="project" value="UniProtKB-UniRule"/>
</dbReference>
<dbReference type="CDD" id="cd18110">
    <property type="entry name" value="ATP-synt_F1_beta_C"/>
    <property type="match status" value="1"/>
</dbReference>
<dbReference type="CDD" id="cd18115">
    <property type="entry name" value="ATP-synt_F1_beta_N"/>
    <property type="match status" value="1"/>
</dbReference>
<dbReference type="CDD" id="cd01133">
    <property type="entry name" value="F1-ATPase_beta_CD"/>
    <property type="match status" value="1"/>
</dbReference>
<dbReference type="FunFam" id="1.10.1140.10:FF:000001">
    <property type="entry name" value="ATP synthase subunit beta"/>
    <property type="match status" value="1"/>
</dbReference>
<dbReference type="FunFam" id="2.40.10.170:FF:000005">
    <property type="entry name" value="ATP synthase subunit beta"/>
    <property type="match status" value="1"/>
</dbReference>
<dbReference type="FunFam" id="3.40.50.300:FF:000026">
    <property type="entry name" value="ATP synthase subunit beta"/>
    <property type="match status" value="1"/>
</dbReference>
<dbReference type="Gene3D" id="2.40.10.170">
    <property type="match status" value="1"/>
</dbReference>
<dbReference type="Gene3D" id="1.10.1140.10">
    <property type="entry name" value="Bovine Mitochondrial F1-atpase, Atp Synthase Beta Chain, Chain D, domain 3"/>
    <property type="match status" value="1"/>
</dbReference>
<dbReference type="Gene3D" id="3.40.50.300">
    <property type="entry name" value="P-loop containing nucleotide triphosphate hydrolases"/>
    <property type="match status" value="1"/>
</dbReference>
<dbReference type="HAMAP" id="MF_01347">
    <property type="entry name" value="ATP_synth_beta_bact"/>
    <property type="match status" value="1"/>
</dbReference>
<dbReference type="InterPro" id="IPR003593">
    <property type="entry name" value="AAA+_ATPase"/>
</dbReference>
<dbReference type="InterPro" id="IPR055190">
    <property type="entry name" value="ATP-synt_VA_C"/>
</dbReference>
<dbReference type="InterPro" id="IPR005722">
    <property type="entry name" value="ATP_synth_F1_bsu"/>
</dbReference>
<dbReference type="InterPro" id="IPR020003">
    <property type="entry name" value="ATPase_a/bsu_AS"/>
</dbReference>
<dbReference type="InterPro" id="IPR050053">
    <property type="entry name" value="ATPase_alpha/beta_chains"/>
</dbReference>
<dbReference type="InterPro" id="IPR004100">
    <property type="entry name" value="ATPase_F1/V1/A1_a/bsu_N"/>
</dbReference>
<dbReference type="InterPro" id="IPR036121">
    <property type="entry name" value="ATPase_F1/V1/A1_a/bsu_N_sf"/>
</dbReference>
<dbReference type="InterPro" id="IPR000194">
    <property type="entry name" value="ATPase_F1/V1/A1_a/bsu_nucl-bd"/>
</dbReference>
<dbReference type="InterPro" id="IPR024034">
    <property type="entry name" value="ATPase_F1/V1_b/a_C"/>
</dbReference>
<dbReference type="InterPro" id="IPR027417">
    <property type="entry name" value="P-loop_NTPase"/>
</dbReference>
<dbReference type="NCBIfam" id="TIGR01039">
    <property type="entry name" value="atpD"/>
    <property type="match status" value="1"/>
</dbReference>
<dbReference type="PANTHER" id="PTHR15184">
    <property type="entry name" value="ATP SYNTHASE"/>
    <property type="match status" value="1"/>
</dbReference>
<dbReference type="PANTHER" id="PTHR15184:SF71">
    <property type="entry name" value="ATP SYNTHASE SUBUNIT BETA, MITOCHONDRIAL"/>
    <property type="match status" value="1"/>
</dbReference>
<dbReference type="Pfam" id="PF00006">
    <property type="entry name" value="ATP-synt_ab"/>
    <property type="match status" value="1"/>
</dbReference>
<dbReference type="Pfam" id="PF02874">
    <property type="entry name" value="ATP-synt_ab_N"/>
    <property type="match status" value="1"/>
</dbReference>
<dbReference type="Pfam" id="PF22919">
    <property type="entry name" value="ATP-synt_VA_C"/>
    <property type="match status" value="1"/>
</dbReference>
<dbReference type="PIRSF" id="PIRSF039072">
    <property type="entry name" value="ATPase_subunit_beta"/>
    <property type="match status" value="1"/>
</dbReference>
<dbReference type="SMART" id="SM00382">
    <property type="entry name" value="AAA"/>
    <property type="match status" value="1"/>
</dbReference>
<dbReference type="SUPFAM" id="SSF47917">
    <property type="entry name" value="C-terminal domain of alpha and beta subunits of F1 ATP synthase"/>
    <property type="match status" value="1"/>
</dbReference>
<dbReference type="SUPFAM" id="SSF50615">
    <property type="entry name" value="N-terminal domain of alpha and beta subunits of F1 ATP synthase"/>
    <property type="match status" value="1"/>
</dbReference>
<dbReference type="SUPFAM" id="SSF52540">
    <property type="entry name" value="P-loop containing nucleoside triphosphate hydrolases"/>
    <property type="match status" value="1"/>
</dbReference>
<dbReference type="PROSITE" id="PS00152">
    <property type="entry name" value="ATPASE_ALPHA_BETA"/>
    <property type="match status" value="1"/>
</dbReference>
<gene>
    <name evidence="1" type="primary">atpD</name>
    <name type="ordered locus">RD1_3533</name>
</gene>
<feature type="chain" id="PRO_0000254365" description="ATP synthase subunit beta">
    <location>
        <begin position="1"/>
        <end position="474"/>
    </location>
</feature>
<feature type="binding site" evidence="1">
    <location>
        <begin position="151"/>
        <end position="158"/>
    </location>
    <ligand>
        <name>ATP</name>
        <dbReference type="ChEBI" id="CHEBI:30616"/>
    </ligand>
</feature>
<organism>
    <name type="scientific">Roseobacter denitrificans (strain ATCC 33942 / OCh 114)</name>
    <name type="common">Erythrobacter sp. (strain OCh 114)</name>
    <name type="synonym">Roseobacter denitrificans</name>
    <dbReference type="NCBI Taxonomy" id="375451"/>
    <lineage>
        <taxon>Bacteria</taxon>
        <taxon>Pseudomonadati</taxon>
        <taxon>Pseudomonadota</taxon>
        <taxon>Alphaproteobacteria</taxon>
        <taxon>Rhodobacterales</taxon>
        <taxon>Roseobacteraceae</taxon>
        <taxon>Roseobacter</taxon>
    </lineage>
</organism>
<comment type="function">
    <text evidence="1">Produces ATP from ADP in the presence of a proton gradient across the membrane. The catalytic sites are hosted primarily by the beta subunits.</text>
</comment>
<comment type="catalytic activity">
    <reaction evidence="1">
        <text>ATP + H2O + 4 H(+)(in) = ADP + phosphate + 5 H(+)(out)</text>
        <dbReference type="Rhea" id="RHEA:57720"/>
        <dbReference type="ChEBI" id="CHEBI:15377"/>
        <dbReference type="ChEBI" id="CHEBI:15378"/>
        <dbReference type="ChEBI" id="CHEBI:30616"/>
        <dbReference type="ChEBI" id="CHEBI:43474"/>
        <dbReference type="ChEBI" id="CHEBI:456216"/>
        <dbReference type="EC" id="7.1.2.2"/>
    </reaction>
</comment>
<comment type="subunit">
    <text evidence="1">F-type ATPases have 2 components, CF(1) - the catalytic core - and CF(0) - the membrane proton channel. CF(1) has five subunits: alpha(3), beta(3), gamma(1), delta(1), epsilon(1). CF(0) has four main subunits: a(1), b(1), b'(1) and c(9-12).</text>
</comment>
<comment type="subcellular location">
    <subcellularLocation>
        <location evidence="1">Cell inner membrane</location>
        <topology evidence="1">Peripheral membrane protein</topology>
    </subcellularLocation>
</comment>
<comment type="similarity">
    <text evidence="1">Belongs to the ATPase alpha/beta chains family.</text>
</comment>
<sequence length="474" mass="50569">MANAVGKITQVIGAVVDVQFADHLPEILNALETNNNGNRLVLEVAQHLGENTVRAIAMDATEGLVRGQTVTDTDGPISIPVGNATLGRIMNVVGEPIDEKGPVATDETRSIHQEAPAFAEQSTSSEVLETGIKVIDLLAPYAKGGKIGLFGGAGVGKTVLIMELINNIAKVHSGFSVFAGVGERTREGNDLYHEMIESSVIVPDNLTESKVALVYGQMNEPPGARMRVALTGLTLAEQFRDQSGTDVLFFVDNIFRFTQAGSEVSALLGRIPSAVGYQPTLATDMGAMQERITSTKAGSITSVQAVYVPADDLTDPAPATSFAHLDATTVLSRAISELGIYPAVDPLDSTSRLMDPQVLGEEHYNVARDVQGILQRYKSLQDIIAILGMDELSEEDKLTVARARKIQRFLSQPFDVAKVFTGSDGKQVPLAETIESFKAVVAGEYDHLPEGAFYMVGGIEEVKAKAEQMAADAA</sequence>
<protein>
    <recommendedName>
        <fullName evidence="1">ATP synthase subunit beta</fullName>
        <ecNumber evidence="1">7.1.2.2</ecNumber>
    </recommendedName>
    <alternativeName>
        <fullName evidence="1">ATP synthase F1 sector subunit beta</fullName>
    </alternativeName>
    <alternativeName>
        <fullName evidence="1">F-ATPase subunit beta</fullName>
    </alternativeName>
</protein>
<evidence type="ECO:0000255" key="1">
    <source>
        <dbReference type="HAMAP-Rule" id="MF_01347"/>
    </source>
</evidence>
<accession>Q162S9</accession>
<proteinExistence type="inferred from homology"/>
<name>ATPB_ROSDO</name>
<keyword id="KW-0066">ATP synthesis</keyword>
<keyword id="KW-0067">ATP-binding</keyword>
<keyword id="KW-0997">Cell inner membrane</keyword>
<keyword id="KW-1003">Cell membrane</keyword>
<keyword id="KW-0139">CF(1)</keyword>
<keyword id="KW-0375">Hydrogen ion transport</keyword>
<keyword id="KW-0406">Ion transport</keyword>
<keyword id="KW-0472">Membrane</keyword>
<keyword id="KW-0547">Nucleotide-binding</keyword>
<keyword id="KW-1185">Reference proteome</keyword>
<keyword id="KW-1278">Translocase</keyword>
<keyword id="KW-0813">Transport</keyword>